<protein>
    <recommendedName>
        <fullName evidence="1">Probable transcriptional regulatory protein SP_1922</fullName>
    </recommendedName>
</protein>
<organism>
    <name type="scientific">Streptococcus pneumoniae serotype 4 (strain ATCC BAA-334 / TIGR4)</name>
    <dbReference type="NCBI Taxonomy" id="170187"/>
    <lineage>
        <taxon>Bacteria</taxon>
        <taxon>Bacillati</taxon>
        <taxon>Bacillota</taxon>
        <taxon>Bacilli</taxon>
        <taxon>Lactobacillales</taxon>
        <taxon>Streptococcaceae</taxon>
        <taxon>Streptococcus</taxon>
    </lineage>
</organism>
<sequence length="238" mass="25830">MGRKWANIVAKKTAKDGANSKVYAKFGVEIYVAAKKGDPDPESNSALKFVIDRAKQAQVPKHIIDKAIDKAKGNTDETFTEGRYEGFGPNGSMLIVDTLTSNVNRTAANVRAAFGKNGGNMGASGSVSYLFDNKGVIVFGGEDADAVFEQLLEADVDVDDVEAQEGTITVYTAPTDLHKAIVALRESGIEEFQVTELEMIPQSEVELSGEDLETFEKLYSVLEDDEDVQKIYTNVDGF</sequence>
<gene>
    <name type="ordered locus">SP_1922</name>
</gene>
<reference key="1">
    <citation type="journal article" date="2001" name="Science">
        <title>Complete genome sequence of a virulent isolate of Streptococcus pneumoniae.</title>
        <authorList>
            <person name="Tettelin H."/>
            <person name="Nelson K.E."/>
            <person name="Paulsen I.T."/>
            <person name="Eisen J.A."/>
            <person name="Read T.D."/>
            <person name="Peterson S.N."/>
            <person name="Heidelberg J.F."/>
            <person name="DeBoy R.T."/>
            <person name="Haft D.H."/>
            <person name="Dodson R.J."/>
            <person name="Durkin A.S."/>
            <person name="Gwinn M.L."/>
            <person name="Kolonay J.F."/>
            <person name="Nelson W.C."/>
            <person name="Peterson J.D."/>
            <person name="Umayam L.A."/>
            <person name="White O."/>
            <person name="Salzberg S.L."/>
            <person name="Lewis M.R."/>
            <person name="Radune D."/>
            <person name="Holtzapple E.K."/>
            <person name="Khouri H.M."/>
            <person name="Wolf A.M."/>
            <person name="Utterback T.R."/>
            <person name="Hansen C.L."/>
            <person name="McDonald L.A."/>
            <person name="Feldblyum T.V."/>
            <person name="Angiuoli S.V."/>
            <person name="Dickinson T."/>
            <person name="Hickey E.K."/>
            <person name="Holt I.E."/>
            <person name="Loftus B.J."/>
            <person name="Yang F."/>
            <person name="Smith H.O."/>
            <person name="Venter J.C."/>
            <person name="Dougherty B.A."/>
            <person name="Morrison D.A."/>
            <person name="Hollingshead S.K."/>
            <person name="Fraser C.M."/>
        </authorList>
    </citation>
    <scope>NUCLEOTIDE SEQUENCE [LARGE SCALE GENOMIC DNA]</scope>
    <source>
        <strain>ATCC BAA-334 / TIGR4</strain>
    </source>
</reference>
<keyword id="KW-0963">Cytoplasm</keyword>
<keyword id="KW-0238">DNA-binding</keyword>
<keyword id="KW-1185">Reference proteome</keyword>
<keyword id="KW-0804">Transcription</keyword>
<keyword id="KW-0805">Transcription regulation</keyword>
<feature type="chain" id="PRO_0000175904" description="Probable transcriptional regulatory protein SP_1922">
    <location>
        <begin position="1"/>
        <end position="238"/>
    </location>
</feature>
<comment type="subcellular location">
    <subcellularLocation>
        <location evidence="1">Cytoplasm</location>
    </subcellularLocation>
</comment>
<comment type="similarity">
    <text evidence="1">Belongs to the TACO1 family. YeeN subfamily.</text>
</comment>
<evidence type="ECO:0000255" key="1">
    <source>
        <dbReference type="HAMAP-Rule" id="MF_00918"/>
    </source>
</evidence>
<proteinExistence type="inferred from homology"/>
<dbReference type="EMBL" id="AE005672">
    <property type="protein sequence ID" value="AAK75990.1"/>
    <property type="molecule type" value="Genomic_DNA"/>
</dbReference>
<dbReference type="PIR" id="E95224">
    <property type="entry name" value="E95224"/>
</dbReference>
<dbReference type="RefSeq" id="WP_000532876.1">
    <property type="nucleotide sequence ID" value="NZ_CP155539.1"/>
</dbReference>
<dbReference type="SMR" id="P67186"/>
<dbReference type="PaxDb" id="170187-SP_1922"/>
<dbReference type="EnsemblBacteria" id="AAK75990">
    <property type="protein sequence ID" value="AAK75990"/>
    <property type="gene ID" value="SP_1922"/>
</dbReference>
<dbReference type="KEGG" id="spn:SP_1922"/>
<dbReference type="eggNOG" id="COG0217">
    <property type="taxonomic scope" value="Bacteria"/>
</dbReference>
<dbReference type="PhylomeDB" id="P67186"/>
<dbReference type="BioCyc" id="SPNE170187:G1FZB-1976-MONOMER"/>
<dbReference type="Proteomes" id="UP000000585">
    <property type="component" value="Chromosome"/>
</dbReference>
<dbReference type="GO" id="GO:0005829">
    <property type="term" value="C:cytosol"/>
    <property type="evidence" value="ECO:0007669"/>
    <property type="project" value="TreeGrafter"/>
</dbReference>
<dbReference type="GO" id="GO:0003677">
    <property type="term" value="F:DNA binding"/>
    <property type="evidence" value="ECO:0007669"/>
    <property type="project" value="UniProtKB-UniRule"/>
</dbReference>
<dbReference type="GO" id="GO:0006355">
    <property type="term" value="P:regulation of DNA-templated transcription"/>
    <property type="evidence" value="ECO:0007669"/>
    <property type="project" value="UniProtKB-UniRule"/>
</dbReference>
<dbReference type="FunFam" id="1.10.10.200:FF:000003">
    <property type="entry name" value="Probable transcriptional regulatory protein YeeN"/>
    <property type="match status" value="1"/>
</dbReference>
<dbReference type="FunFam" id="3.30.70.980:FF:000004">
    <property type="entry name" value="Probable transcriptional regulatory protein YeeN"/>
    <property type="match status" value="1"/>
</dbReference>
<dbReference type="Gene3D" id="1.10.10.200">
    <property type="match status" value="1"/>
</dbReference>
<dbReference type="Gene3D" id="3.30.70.980">
    <property type="match status" value="2"/>
</dbReference>
<dbReference type="HAMAP" id="MF_00693">
    <property type="entry name" value="Transcrip_reg_TACO1"/>
    <property type="match status" value="1"/>
</dbReference>
<dbReference type="HAMAP" id="MF_00918">
    <property type="entry name" value="Transcrip_reg_TACO1_YeeN"/>
    <property type="match status" value="1"/>
</dbReference>
<dbReference type="InterPro" id="IPR017856">
    <property type="entry name" value="Integrase-like_N"/>
</dbReference>
<dbReference type="InterPro" id="IPR048300">
    <property type="entry name" value="TACO1_YebC-like_2nd/3rd_dom"/>
</dbReference>
<dbReference type="InterPro" id="IPR049083">
    <property type="entry name" value="TACO1_YebC_N"/>
</dbReference>
<dbReference type="InterPro" id="IPR002876">
    <property type="entry name" value="Transcrip_reg_TACO1-like"/>
</dbReference>
<dbReference type="InterPro" id="IPR026564">
    <property type="entry name" value="Transcrip_reg_TACO1-like_dom3"/>
</dbReference>
<dbReference type="InterPro" id="IPR026562">
    <property type="entry name" value="Transcrip_reg_TACO1_YeeN"/>
</dbReference>
<dbReference type="InterPro" id="IPR029072">
    <property type="entry name" value="YebC-like"/>
</dbReference>
<dbReference type="NCBIfam" id="NF001030">
    <property type="entry name" value="PRK00110.1"/>
    <property type="match status" value="1"/>
</dbReference>
<dbReference type="NCBIfam" id="NF009044">
    <property type="entry name" value="PRK12378.1"/>
    <property type="match status" value="1"/>
</dbReference>
<dbReference type="NCBIfam" id="TIGR01033">
    <property type="entry name" value="YebC/PmpR family DNA-binding transcriptional regulator"/>
    <property type="match status" value="1"/>
</dbReference>
<dbReference type="PANTHER" id="PTHR12532">
    <property type="entry name" value="TRANSLATIONAL ACTIVATOR OF CYTOCHROME C OXIDASE 1"/>
    <property type="match status" value="1"/>
</dbReference>
<dbReference type="PANTHER" id="PTHR12532:SF0">
    <property type="entry name" value="TRANSLATIONAL ACTIVATOR OF CYTOCHROME C OXIDASE 1"/>
    <property type="match status" value="1"/>
</dbReference>
<dbReference type="Pfam" id="PF20772">
    <property type="entry name" value="TACO1_YebC_N"/>
    <property type="match status" value="1"/>
</dbReference>
<dbReference type="Pfam" id="PF01709">
    <property type="entry name" value="Transcrip_reg"/>
    <property type="match status" value="1"/>
</dbReference>
<dbReference type="SUPFAM" id="SSF75625">
    <property type="entry name" value="YebC-like"/>
    <property type="match status" value="1"/>
</dbReference>
<name>Y1922_STRPN</name>
<accession>P67186</accession>
<accession>Q8DNG4</accession>
<accession>Q97NU0</accession>